<proteinExistence type="inferred from homology"/>
<reference key="1">
    <citation type="journal article" date="2009" name="PLoS ONE">
        <title>The complete genome of Teredinibacter turnerae T7901: an intracellular endosymbiont of marine wood-boring bivalves (shipworms).</title>
        <authorList>
            <person name="Yang J.C."/>
            <person name="Madupu R."/>
            <person name="Durkin A.S."/>
            <person name="Ekborg N.A."/>
            <person name="Pedamallu C.S."/>
            <person name="Hostetler J.B."/>
            <person name="Radune D."/>
            <person name="Toms B.S."/>
            <person name="Henrissat B."/>
            <person name="Coutinho P.M."/>
            <person name="Schwarz S."/>
            <person name="Field L."/>
            <person name="Trindade-Silva A.E."/>
            <person name="Soares C.A.G."/>
            <person name="Elshahawi S."/>
            <person name="Hanora A."/>
            <person name="Schmidt E.W."/>
            <person name="Haygood M.G."/>
            <person name="Posfai J."/>
            <person name="Benner J."/>
            <person name="Madinger C."/>
            <person name="Nove J."/>
            <person name="Anton B."/>
            <person name="Chaudhary K."/>
            <person name="Foster J."/>
            <person name="Holman A."/>
            <person name="Kumar S."/>
            <person name="Lessard P.A."/>
            <person name="Luyten Y.A."/>
            <person name="Slatko B."/>
            <person name="Wood N."/>
            <person name="Wu B."/>
            <person name="Teplitski M."/>
            <person name="Mougous J.D."/>
            <person name="Ward N."/>
            <person name="Eisen J.A."/>
            <person name="Badger J.H."/>
            <person name="Distel D.L."/>
        </authorList>
    </citation>
    <scope>NUCLEOTIDE SEQUENCE [LARGE SCALE GENOMIC DNA]</scope>
    <source>
        <strain>ATCC 39867 / T7901</strain>
    </source>
</reference>
<accession>C5BRK9</accession>
<sequence>MEQYRGTTILSIRRGNQVVIGGDGQVSLGNTIMKGNARKVRRLYKNQVIAGFAGGTADAFTLFERFEAKLESHGGQLVRAAVELAKDWRTDRALRRLEALLAVADKEASLIITGNGDVIQPEDDLIAIGSGGAFAQSAARALLDNTELSAREIVQKGLTIAGDICIYTNHNQTIEELEY</sequence>
<gene>
    <name evidence="1" type="primary">hslV</name>
    <name type="ordered locus">TERTU_3592</name>
</gene>
<evidence type="ECO:0000255" key="1">
    <source>
        <dbReference type="HAMAP-Rule" id="MF_00248"/>
    </source>
</evidence>
<keyword id="KW-0021">Allosteric enzyme</keyword>
<keyword id="KW-0963">Cytoplasm</keyword>
<keyword id="KW-0378">Hydrolase</keyword>
<keyword id="KW-0479">Metal-binding</keyword>
<keyword id="KW-0645">Protease</keyword>
<keyword id="KW-1185">Reference proteome</keyword>
<keyword id="KW-0915">Sodium</keyword>
<keyword id="KW-0888">Threonine protease</keyword>
<protein>
    <recommendedName>
        <fullName evidence="1">ATP-dependent protease subunit HslV</fullName>
        <ecNumber evidence="1">3.4.25.2</ecNumber>
    </recommendedName>
</protein>
<dbReference type="EC" id="3.4.25.2" evidence="1"/>
<dbReference type="EMBL" id="CP001614">
    <property type="protein sequence ID" value="ACR12320.1"/>
    <property type="molecule type" value="Genomic_DNA"/>
</dbReference>
<dbReference type="RefSeq" id="WP_015818432.1">
    <property type="nucleotide sequence ID" value="NC_012997.1"/>
</dbReference>
<dbReference type="SMR" id="C5BRK9"/>
<dbReference type="STRING" id="377629.TERTU_3592"/>
<dbReference type="MEROPS" id="T01.006"/>
<dbReference type="KEGG" id="ttu:TERTU_3592"/>
<dbReference type="eggNOG" id="COG5405">
    <property type="taxonomic scope" value="Bacteria"/>
</dbReference>
<dbReference type="HOGENOM" id="CLU_093872_1_0_6"/>
<dbReference type="OrthoDB" id="9804884at2"/>
<dbReference type="Proteomes" id="UP000009080">
    <property type="component" value="Chromosome"/>
</dbReference>
<dbReference type="GO" id="GO:0009376">
    <property type="term" value="C:HslUV protease complex"/>
    <property type="evidence" value="ECO:0007669"/>
    <property type="project" value="UniProtKB-UniRule"/>
</dbReference>
<dbReference type="GO" id="GO:0005839">
    <property type="term" value="C:proteasome core complex"/>
    <property type="evidence" value="ECO:0007669"/>
    <property type="project" value="InterPro"/>
</dbReference>
<dbReference type="GO" id="GO:0046872">
    <property type="term" value="F:metal ion binding"/>
    <property type="evidence" value="ECO:0007669"/>
    <property type="project" value="UniProtKB-KW"/>
</dbReference>
<dbReference type="GO" id="GO:0004298">
    <property type="term" value="F:threonine-type endopeptidase activity"/>
    <property type="evidence" value="ECO:0007669"/>
    <property type="project" value="UniProtKB-KW"/>
</dbReference>
<dbReference type="GO" id="GO:0051603">
    <property type="term" value="P:proteolysis involved in protein catabolic process"/>
    <property type="evidence" value="ECO:0007669"/>
    <property type="project" value="InterPro"/>
</dbReference>
<dbReference type="CDD" id="cd01913">
    <property type="entry name" value="protease_HslV"/>
    <property type="match status" value="1"/>
</dbReference>
<dbReference type="FunFam" id="3.60.20.10:FF:000002">
    <property type="entry name" value="ATP-dependent protease subunit HslV"/>
    <property type="match status" value="1"/>
</dbReference>
<dbReference type="Gene3D" id="3.60.20.10">
    <property type="entry name" value="Glutamine Phosphoribosylpyrophosphate, subunit 1, domain 1"/>
    <property type="match status" value="1"/>
</dbReference>
<dbReference type="HAMAP" id="MF_00248">
    <property type="entry name" value="HslV"/>
    <property type="match status" value="1"/>
</dbReference>
<dbReference type="InterPro" id="IPR022281">
    <property type="entry name" value="ATP-dep_Prtase_HsIV_su"/>
</dbReference>
<dbReference type="InterPro" id="IPR029055">
    <property type="entry name" value="Ntn_hydrolases_N"/>
</dbReference>
<dbReference type="InterPro" id="IPR001353">
    <property type="entry name" value="Proteasome_sua/b"/>
</dbReference>
<dbReference type="InterPro" id="IPR023333">
    <property type="entry name" value="Proteasome_suB-type"/>
</dbReference>
<dbReference type="NCBIfam" id="TIGR03692">
    <property type="entry name" value="ATP_dep_HslV"/>
    <property type="match status" value="1"/>
</dbReference>
<dbReference type="NCBIfam" id="NF003964">
    <property type="entry name" value="PRK05456.1"/>
    <property type="match status" value="1"/>
</dbReference>
<dbReference type="PANTHER" id="PTHR32194:SF0">
    <property type="entry name" value="ATP-DEPENDENT PROTEASE SUBUNIT HSLV"/>
    <property type="match status" value="1"/>
</dbReference>
<dbReference type="PANTHER" id="PTHR32194">
    <property type="entry name" value="METALLOPROTEASE TLDD"/>
    <property type="match status" value="1"/>
</dbReference>
<dbReference type="Pfam" id="PF00227">
    <property type="entry name" value="Proteasome"/>
    <property type="match status" value="1"/>
</dbReference>
<dbReference type="PIRSF" id="PIRSF039093">
    <property type="entry name" value="HslV"/>
    <property type="match status" value="1"/>
</dbReference>
<dbReference type="SUPFAM" id="SSF56235">
    <property type="entry name" value="N-terminal nucleophile aminohydrolases (Ntn hydrolases)"/>
    <property type="match status" value="1"/>
</dbReference>
<dbReference type="PROSITE" id="PS51476">
    <property type="entry name" value="PROTEASOME_BETA_2"/>
    <property type="match status" value="1"/>
</dbReference>
<organism>
    <name type="scientific">Teredinibacter turnerae (strain ATCC 39867 / T7901)</name>
    <dbReference type="NCBI Taxonomy" id="377629"/>
    <lineage>
        <taxon>Bacteria</taxon>
        <taxon>Pseudomonadati</taxon>
        <taxon>Pseudomonadota</taxon>
        <taxon>Gammaproteobacteria</taxon>
        <taxon>Cellvibrionales</taxon>
        <taxon>Cellvibrionaceae</taxon>
        <taxon>Teredinibacter</taxon>
    </lineage>
</organism>
<feature type="chain" id="PRO_1000204515" description="ATP-dependent protease subunit HslV">
    <location>
        <begin position="1"/>
        <end position="179"/>
    </location>
</feature>
<feature type="active site" evidence="1">
    <location>
        <position position="7"/>
    </location>
</feature>
<feature type="binding site" evidence="1">
    <location>
        <position position="162"/>
    </location>
    <ligand>
        <name>Na(+)</name>
        <dbReference type="ChEBI" id="CHEBI:29101"/>
    </ligand>
</feature>
<feature type="binding site" evidence="1">
    <location>
        <position position="165"/>
    </location>
    <ligand>
        <name>Na(+)</name>
        <dbReference type="ChEBI" id="CHEBI:29101"/>
    </ligand>
</feature>
<feature type="binding site" evidence="1">
    <location>
        <position position="168"/>
    </location>
    <ligand>
        <name>Na(+)</name>
        <dbReference type="ChEBI" id="CHEBI:29101"/>
    </ligand>
</feature>
<name>HSLV_TERTT</name>
<comment type="function">
    <text evidence="1">Protease subunit of a proteasome-like degradation complex believed to be a general protein degrading machinery.</text>
</comment>
<comment type="catalytic activity">
    <reaction evidence="1">
        <text>ATP-dependent cleavage of peptide bonds with broad specificity.</text>
        <dbReference type="EC" id="3.4.25.2"/>
    </reaction>
</comment>
<comment type="activity regulation">
    <text evidence="1">Allosterically activated by HslU binding.</text>
</comment>
<comment type="subunit">
    <text evidence="1">A double ring-shaped homohexamer of HslV is capped on each side by a ring-shaped HslU homohexamer. The assembly of the HslU/HslV complex is dependent on binding of ATP.</text>
</comment>
<comment type="subcellular location">
    <subcellularLocation>
        <location evidence="1">Cytoplasm</location>
    </subcellularLocation>
</comment>
<comment type="similarity">
    <text evidence="1">Belongs to the peptidase T1B family. HslV subfamily.</text>
</comment>